<name>LCBA1_AERHY</name>
<sequence>MRKLKKFFKNPSIFIRDHLNKKYPIVRNEISCSENEEYILMRHDLALESQINIDFPIDVVFTWVNDADPKWQERYQKYKQSVDTEHVGRHALDSARFSNHDELKYSLGCVLKFLPWIRRIYIVTDKQCPNWLTPNDKIRVIDHSEMIEKQYLPTFNSHVIEAHLHKIPDLAEHFIYFNDDVFVARPLPAGHFFRSNGIASLFMSKKSLSTMQAKGTDTPTLSASLKSASLLNHDFSFLIDHPLVHTYVPLRKSMFEECWRLYRADIKRFLPNRFRTNNDLNLATFFIPWLSYIRGVAVPSRDICYYFNARSPAAANYFNALLLAKKNGTLPHSFCANDFNTKNVNPRNNVANLLSNYFSE</sequence>
<protein>
    <recommendedName>
        <fullName>Capsular polysaccharide phosphotransferase LcbA</fullName>
        <ecNumber>2.7.-.-</ecNumber>
    </recommendedName>
    <alternativeName>
        <fullName>Stealth protein LcbA</fullName>
    </alternativeName>
</protein>
<evidence type="ECO:0000305" key="1"/>
<reference key="1">
    <citation type="journal article" date="2003" name="Microbiology">
        <title>Detection and genetic analysis of group II capsules in Aeromonas hydrophila.</title>
        <authorList>
            <person name="Zhang Y.L."/>
            <person name="Lau Y.L."/>
            <person name="Arakawa E."/>
            <person name="Leung K.Y."/>
        </authorList>
    </citation>
    <scope>NUCLEOTIDE SEQUENCE [GENOMIC DNA]</scope>
    <scope>DISCUSSION OF POSSIBLE FUNCTION</scope>
    <source>
        <strain>PPD11/90 / Serogroup O:21</strain>
    </source>
</reference>
<reference key="2">
    <citation type="journal article" date="2005" name="PLoS Comput. Biol.">
        <title>Stealth proteins: in silico identification of a novel protein family rendering bacterial pathogens invisible to host immune defense.</title>
        <authorList>
            <person name="Sperisen P."/>
            <person name="Schmid C.D."/>
            <person name="Bucher P."/>
            <person name="Zilian O."/>
        </authorList>
    </citation>
    <scope>IDENTIFICATION AS A STEALTH PROTEIN</scope>
    <scope>PREDICTION OF FUNCTION</scope>
</reference>
<feature type="chain" id="PRO_0000235943" description="Capsular polysaccharide phosphotransferase LcbA">
    <location>
        <begin position="1"/>
        <end position="360"/>
    </location>
</feature>
<proteinExistence type="inferred from homology"/>
<keyword id="KW-0270">Exopolysaccharide synthesis</keyword>
<keyword id="KW-0808">Transferase</keyword>
<accession>Q84BK9</accession>
<organism>
    <name type="scientific">Aeromonas hydrophila</name>
    <dbReference type="NCBI Taxonomy" id="644"/>
    <lineage>
        <taxon>Bacteria</taxon>
        <taxon>Pseudomonadati</taxon>
        <taxon>Pseudomonadota</taxon>
        <taxon>Gammaproteobacteria</taxon>
        <taxon>Aeromonadales</taxon>
        <taxon>Aeromonadaceae</taxon>
        <taxon>Aeromonas</taxon>
    </lineage>
</organism>
<dbReference type="EC" id="2.7.-.-"/>
<dbReference type="EMBL" id="AY144595">
    <property type="protein sequence ID" value="AAN10298.1"/>
    <property type="molecule type" value="Genomic_DNA"/>
</dbReference>
<dbReference type="SMR" id="Q84BK9"/>
<dbReference type="GO" id="GO:0016772">
    <property type="term" value="F:transferase activity, transferring phosphorus-containing groups"/>
    <property type="evidence" value="ECO:0007669"/>
    <property type="project" value="InterPro"/>
</dbReference>
<dbReference type="GO" id="GO:0000271">
    <property type="term" value="P:polysaccharide biosynthetic process"/>
    <property type="evidence" value="ECO:0007669"/>
    <property type="project" value="UniProtKB-KW"/>
</dbReference>
<dbReference type="InterPro" id="IPR047141">
    <property type="entry name" value="Stealth"/>
</dbReference>
<dbReference type="InterPro" id="IPR031358">
    <property type="entry name" value="Stealth_CR1"/>
</dbReference>
<dbReference type="InterPro" id="IPR021520">
    <property type="entry name" value="Stealth_CR2"/>
</dbReference>
<dbReference type="PANTHER" id="PTHR24045">
    <property type="match status" value="1"/>
</dbReference>
<dbReference type="PANTHER" id="PTHR24045:SF0">
    <property type="entry name" value="N-ACETYLGLUCOSAMINE-1-PHOSPHOTRANSFERASE SUBUNITS ALPHA_BETA"/>
    <property type="match status" value="1"/>
</dbReference>
<dbReference type="Pfam" id="PF17101">
    <property type="entry name" value="Stealth_CR1"/>
    <property type="match status" value="1"/>
</dbReference>
<dbReference type="Pfam" id="PF11380">
    <property type="entry name" value="Stealth_CR2"/>
    <property type="match status" value="1"/>
</dbReference>
<comment type="function">
    <text>Part of a group II capsule biosynthesis locus.</text>
</comment>
<comment type="miscellaneous">
    <text>Stealth proteins are part of a protein family that is conserved from bacteria to higher eukaryotes. Family members were first identified in microbes as proteins that help pathogens to elude the host innate immune system. Microbial stealth proteins are involved in the biosynthesis of exopolysaccharides. Stealth proteins are predicted to function as hexose-1-phosphoryltransferases.</text>
</comment>
<comment type="similarity">
    <text evidence="1">Belongs to the stealth family.</text>
</comment>
<gene>
    <name type="primary">lcbA</name>
</gene>